<feature type="chain" id="PRO_1000094795" description="S-adenosylmethionine:tRNA ribosyltransferase-isomerase">
    <location>
        <begin position="1"/>
        <end position="357"/>
    </location>
</feature>
<proteinExistence type="inferred from homology"/>
<keyword id="KW-0963">Cytoplasm</keyword>
<keyword id="KW-0671">Queuosine biosynthesis</keyword>
<keyword id="KW-1185">Reference proteome</keyword>
<keyword id="KW-0949">S-adenosyl-L-methionine</keyword>
<keyword id="KW-0808">Transferase</keyword>
<reference key="1">
    <citation type="journal article" date="2008" name="BMC Genomics">
        <title>Complete genome of Phenylobacterium zucineum - a novel facultative intracellular bacterium isolated from human erythroleukemia cell line K562.</title>
        <authorList>
            <person name="Luo Y."/>
            <person name="Xu X."/>
            <person name="Ding Z."/>
            <person name="Liu Z."/>
            <person name="Zhang B."/>
            <person name="Yan Z."/>
            <person name="Sun J."/>
            <person name="Hu S."/>
            <person name="Hu X."/>
        </authorList>
    </citation>
    <scope>NUCLEOTIDE SEQUENCE [LARGE SCALE GENOMIC DNA]</scope>
    <source>
        <strain>HLK1</strain>
    </source>
</reference>
<name>QUEA_PHEZH</name>
<evidence type="ECO:0000255" key="1">
    <source>
        <dbReference type="HAMAP-Rule" id="MF_00113"/>
    </source>
</evidence>
<gene>
    <name evidence="1" type="primary">queA</name>
    <name type="ordered locus">PHZ_c1403</name>
</gene>
<dbReference type="EC" id="2.4.99.17" evidence="1"/>
<dbReference type="EMBL" id="CP000747">
    <property type="protein sequence ID" value="ACG77817.1"/>
    <property type="molecule type" value="Genomic_DNA"/>
</dbReference>
<dbReference type="RefSeq" id="WP_012521961.1">
    <property type="nucleotide sequence ID" value="NC_011144.1"/>
</dbReference>
<dbReference type="SMR" id="B4R9Q3"/>
<dbReference type="STRING" id="450851.PHZ_c1403"/>
<dbReference type="KEGG" id="pzu:PHZ_c1403"/>
<dbReference type="eggNOG" id="COG0809">
    <property type="taxonomic scope" value="Bacteria"/>
</dbReference>
<dbReference type="HOGENOM" id="CLU_039110_1_1_5"/>
<dbReference type="OrthoDB" id="9805933at2"/>
<dbReference type="UniPathway" id="UPA00392"/>
<dbReference type="Proteomes" id="UP000001868">
    <property type="component" value="Chromosome"/>
</dbReference>
<dbReference type="GO" id="GO:0005737">
    <property type="term" value="C:cytoplasm"/>
    <property type="evidence" value="ECO:0007669"/>
    <property type="project" value="UniProtKB-SubCell"/>
</dbReference>
<dbReference type="GO" id="GO:0051075">
    <property type="term" value="F:S-adenosylmethionine:tRNA ribosyltransferase-isomerase activity"/>
    <property type="evidence" value="ECO:0007669"/>
    <property type="project" value="UniProtKB-EC"/>
</dbReference>
<dbReference type="GO" id="GO:0008616">
    <property type="term" value="P:queuosine biosynthetic process"/>
    <property type="evidence" value="ECO:0007669"/>
    <property type="project" value="UniProtKB-UniRule"/>
</dbReference>
<dbReference type="GO" id="GO:0002099">
    <property type="term" value="P:tRNA wobble guanine modification"/>
    <property type="evidence" value="ECO:0007669"/>
    <property type="project" value="TreeGrafter"/>
</dbReference>
<dbReference type="FunFam" id="3.40.1780.10:FF:000001">
    <property type="entry name" value="S-adenosylmethionine:tRNA ribosyltransferase-isomerase"/>
    <property type="match status" value="1"/>
</dbReference>
<dbReference type="Gene3D" id="2.40.10.240">
    <property type="entry name" value="QueA-like"/>
    <property type="match status" value="1"/>
</dbReference>
<dbReference type="Gene3D" id="3.40.1780.10">
    <property type="entry name" value="QueA-like"/>
    <property type="match status" value="1"/>
</dbReference>
<dbReference type="HAMAP" id="MF_00113">
    <property type="entry name" value="QueA"/>
    <property type="match status" value="1"/>
</dbReference>
<dbReference type="InterPro" id="IPR003699">
    <property type="entry name" value="QueA"/>
</dbReference>
<dbReference type="InterPro" id="IPR042118">
    <property type="entry name" value="QueA_dom1"/>
</dbReference>
<dbReference type="InterPro" id="IPR042119">
    <property type="entry name" value="QueA_dom2"/>
</dbReference>
<dbReference type="InterPro" id="IPR036100">
    <property type="entry name" value="QueA_sf"/>
</dbReference>
<dbReference type="NCBIfam" id="NF001140">
    <property type="entry name" value="PRK00147.1"/>
    <property type="match status" value="1"/>
</dbReference>
<dbReference type="NCBIfam" id="TIGR00113">
    <property type="entry name" value="queA"/>
    <property type="match status" value="1"/>
</dbReference>
<dbReference type="PANTHER" id="PTHR30307">
    <property type="entry name" value="S-ADENOSYLMETHIONINE:TRNA RIBOSYLTRANSFERASE-ISOMERASE"/>
    <property type="match status" value="1"/>
</dbReference>
<dbReference type="PANTHER" id="PTHR30307:SF0">
    <property type="entry name" value="S-ADENOSYLMETHIONINE:TRNA RIBOSYLTRANSFERASE-ISOMERASE"/>
    <property type="match status" value="1"/>
</dbReference>
<dbReference type="Pfam" id="PF02547">
    <property type="entry name" value="Queuosine_synth"/>
    <property type="match status" value="1"/>
</dbReference>
<dbReference type="SUPFAM" id="SSF111337">
    <property type="entry name" value="QueA-like"/>
    <property type="match status" value="1"/>
</dbReference>
<organism>
    <name type="scientific">Phenylobacterium zucineum (strain HLK1)</name>
    <dbReference type="NCBI Taxonomy" id="450851"/>
    <lineage>
        <taxon>Bacteria</taxon>
        <taxon>Pseudomonadati</taxon>
        <taxon>Pseudomonadota</taxon>
        <taxon>Alphaproteobacteria</taxon>
        <taxon>Caulobacterales</taxon>
        <taxon>Caulobacteraceae</taxon>
        <taxon>Phenylobacterium</taxon>
    </lineage>
</organism>
<sequence>MKLADFDFDLPEEAIALRPANPRDAARLLLVEPGQDFRDLAVRDLPGLLRAGDVLVLNDTRVIPARLKGVRTREGSRVAVEATLHQRKAGHVWTAFMRPGKRLAPGDRVSFGETDDRACFLGALDATVKEKGEGGEVTLAFDLSGPDLDAAIAERGAMPLPPYIAAKRAEDEQDRADYQTVYAEEDGSVAAPTAGLHFTPELLARLAQAGVTTERVTLHVGAGTFLPVKTEDISEHRMHAEWGEVDAATADRLNAARAAGGRIVCVGTTSLRLLESAAGEDGVVRPFRDETAIFITPGYRFRAADGLMTNFHLPKSTLFMLVCAFAGTDTMRAAYRHAIETGYRFYSYGDSSLLWRA</sequence>
<protein>
    <recommendedName>
        <fullName evidence="1">S-adenosylmethionine:tRNA ribosyltransferase-isomerase</fullName>
        <ecNumber evidence="1">2.4.99.17</ecNumber>
    </recommendedName>
    <alternativeName>
        <fullName evidence="1">Queuosine biosynthesis protein QueA</fullName>
    </alternativeName>
</protein>
<comment type="function">
    <text evidence="1">Transfers and isomerizes the ribose moiety from AdoMet to the 7-aminomethyl group of 7-deazaguanine (preQ1-tRNA) to give epoxyqueuosine (oQ-tRNA).</text>
</comment>
<comment type="catalytic activity">
    <reaction evidence="1">
        <text>7-aminomethyl-7-carbaguanosine(34) in tRNA + S-adenosyl-L-methionine = epoxyqueuosine(34) in tRNA + adenine + L-methionine + 2 H(+)</text>
        <dbReference type="Rhea" id="RHEA:32155"/>
        <dbReference type="Rhea" id="RHEA-COMP:10342"/>
        <dbReference type="Rhea" id="RHEA-COMP:18582"/>
        <dbReference type="ChEBI" id="CHEBI:15378"/>
        <dbReference type="ChEBI" id="CHEBI:16708"/>
        <dbReference type="ChEBI" id="CHEBI:57844"/>
        <dbReference type="ChEBI" id="CHEBI:59789"/>
        <dbReference type="ChEBI" id="CHEBI:82833"/>
        <dbReference type="ChEBI" id="CHEBI:194443"/>
        <dbReference type="EC" id="2.4.99.17"/>
    </reaction>
</comment>
<comment type="pathway">
    <text evidence="1">tRNA modification; tRNA-queuosine biosynthesis.</text>
</comment>
<comment type="subunit">
    <text evidence="1">Monomer.</text>
</comment>
<comment type="subcellular location">
    <subcellularLocation>
        <location evidence="1">Cytoplasm</location>
    </subcellularLocation>
</comment>
<comment type="similarity">
    <text evidence="1">Belongs to the QueA family.</text>
</comment>
<accession>B4R9Q3</accession>